<keyword id="KW-0963">Cytoplasm</keyword>
<keyword id="KW-0671">Queuosine biosynthesis</keyword>
<keyword id="KW-0949">S-adenosyl-L-methionine</keyword>
<keyword id="KW-0808">Transferase</keyword>
<protein>
    <recommendedName>
        <fullName evidence="1">S-adenosylmethionine:tRNA ribosyltransferase-isomerase</fullName>
        <ecNumber evidence="1">2.4.99.17</ecNumber>
    </recommendedName>
    <alternativeName>
        <fullName evidence="1">Queuosine biosynthesis protein QueA</fullName>
    </alternativeName>
</protein>
<comment type="function">
    <text evidence="1">Transfers and isomerizes the ribose moiety from AdoMet to the 7-aminomethyl group of 7-deazaguanine (preQ1-tRNA) to give epoxyqueuosine (oQ-tRNA).</text>
</comment>
<comment type="catalytic activity">
    <reaction evidence="1">
        <text>7-aminomethyl-7-carbaguanosine(34) in tRNA + S-adenosyl-L-methionine = epoxyqueuosine(34) in tRNA + adenine + L-methionine + 2 H(+)</text>
        <dbReference type="Rhea" id="RHEA:32155"/>
        <dbReference type="Rhea" id="RHEA-COMP:10342"/>
        <dbReference type="Rhea" id="RHEA-COMP:18582"/>
        <dbReference type="ChEBI" id="CHEBI:15378"/>
        <dbReference type="ChEBI" id="CHEBI:16708"/>
        <dbReference type="ChEBI" id="CHEBI:57844"/>
        <dbReference type="ChEBI" id="CHEBI:59789"/>
        <dbReference type="ChEBI" id="CHEBI:82833"/>
        <dbReference type="ChEBI" id="CHEBI:194443"/>
        <dbReference type="EC" id="2.4.99.17"/>
    </reaction>
</comment>
<comment type="pathway">
    <text evidence="1">tRNA modification; tRNA-queuosine biosynthesis.</text>
</comment>
<comment type="subunit">
    <text evidence="1">Monomer.</text>
</comment>
<comment type="subcellular location">
    <subcellularLocation>
        <location evidence="1">Cytoplasm</location>
    </subcellularLocation>
</comment>
<comment type="similarity">
    <text evidence="1">Belongs to the QueA family.</text>
</comment>
<evidence type="ECO:0000255" key="1">
    <source>
        <dbReference type="HAMAP-Rule" id="MF_00113"/>
    </source>
</evidence>
<gene>
    <name evidence="1" type="primary">queA</name>
    <name type="ordered locus">XCV2696</name>
</gene>
<reference key="1">
    <citation type="journal article" date="2005" name="J. Bacteriol.">
        <title>Insights into genome plasticity and pathogenicity of the plant pathogenic Bacterium Xanthomonas campestris pv. vesicatoria revealed by the complete genome sequence.</title>
        <authorList>
            <person name="Thieme F."/>
            <person name="Koebnik R."/>
            <person name="Bekel T."/>
            <person name="Berger C."/>
            <person name="Boch J."/>
            <person name="Buettner D."/>
            <person name="Caldana C."/>
            <person name="Gaigalat L."/>
            <person name="Goesmann A."/>
            <person name="Kay S."/>
            <person name="Kirchner O."/>
            <person name="Lanz C."/>
            <person name="Linke B."/>
            <person name="McHardy A.C."/>
            <person name="Meyer F."/>
            <person name="Mittenhuber G."/>
            <person name="Nies D.H."/>
            <person name="Niesbach-Kloesgen U."/>
            <person name="Patschkowski T."/>
            <person name="Rueckert C."/>
            <person name="Rupp O."/>
            <person name="Schneiker S."/>
            <person name="Schuster S.C."/>
            <person name="Vorhoelter F.J."/>
            <person name="Weber E."/>
            <person name="Puehler A."/>
            <person name="Bonas U."/>
            <person name="Bartels D."/>
            <person name="Kaiser O."/>
        </authorList>
    </citation>
    <scope>NUCLEOTIDE SEQUENCE [LARGE SCALE GENOMIC DNA]</scope>
    <source>
        <strain>85-10</strain>
    </source>
</reference>
<accession>Q3BS36</accession>
<sequence length="356" mass="39472">MKKSDFHYELPEELIAQAPLAERAASRLLVVPPAPAAFGDRQVRDLPELLQPGDLLIFNDTRVIPARLFGQKASGGRVEILIERLLGEREARVQIGASKSPKAGSVIALDAGGQAEVLGRDGEFYLLRFQIPTPLEHWLLEAGRLPLPPYIRREPGVEDRERYQTVFAREVGAVAAPTAGLHFDEPLLARLRERGVEFGHVTLHVGAGTFQPVRVDKLDQHVMHKEWLNVGATLVEQVRRTRARGGRVIAVGTTVVRSLESAWRKTEAAPEGELQPFAGETQIFILPGYRIRSVDAMVTNFHLPESTLMMMVCAFAGRERIFAAYHHAIAQRYRFFSYGDAMLLWGGESGVGNGES</sequence>
<name>QUEA_XANE5</name>
<dbReference type="EC" id="2.4.99.17" evidence="1"/>
<dbReference type="EMBL" id="AM039952">
    <property type="protein sequence ID" value="CAJ24373.1"/>
    <property type="molecule type" value="Genomic_DNA"/>
</dbReference>
<dbReference type="RefSeq" id="WP_011347824.1">
    <property type="nucleotide sequence ID" value="NZ_CP017190.1"/>
</dbReference>
<dbReference type="SMR" id="Q3BS36"/>
<dbReference type="STRING" id="456327.BJD11_09385"/>
<dbReference type="KEGG" id="xcv:XCV2696"/>
<dbReference type="eggNOG" id="COG0809">
    <property type="taxonomic scope" value="Bacteria"/>
</dbReference>
<dbReference type="HOGENOM" id="CLU_039110_1_0_6"/>
<dbReference type="UniPathway" id="UPA00392"/>
<dbReference type="Proteomes" id="UP000007069">
    <property type="component" value="Chromosome"/>
</dbReference>
<dbReference type="GO" id="GO:0005737">
    <property type="term" value="C:cytoplasm"/>
    <property type="evidence" value="ECO:0007669"/>
    <property type="project" value="UniProtKB-SubCell"/>
</dbReference>
<dbReference type="GO" id="GO:0051075">
    <property type="term" value="F:S-adenosylmethionine:tRNA ribosyltransferase-isomerase activity"/>
    <property type="evidence" value="ECO:0007669"/>
    <property type="project" value="UniProtKB-EC"/>
</dbReference>
<dbReference type="GO" id="GO:0008616">
    <property type="term" value="P:queuosine biosynthetic process"/>
    <property type="evidence" value="ECO:0007669"/>
    <property type="project" value="UniProtKB-UniRule"/>
</dbReference>
<dbReference type="GO" id="GO:0002099">
    <property type="term" value="P:tRNA wobble guanine modification"/>
    <property type="evidence" value="ECO:0007669"/>
    <property type="project" value="TreeGrafter"/>
</dbReference>
<dbReference type="FunFam" id="2.40.10.240:FF:000003">
    <property type="entry name" value="S-adenosylmethionine:tRNA ribosyltransferase-isomerase"/>
    <property type="match status" value="1"/>
</dbReference>
<dbReference type="FunFam" id="3.40.1780.10:FF:000001">
    <property type="entry name" value="S-adenosylmethionine:tRNA ribosyltransferase-isomerase"/>
    <property type="match status" value="1"/>
</dbReference>
<dbReference type="Gene3D" id="2.40.10.240">
    <property type="entry name" value="QueA-like"/>
    <property type="match status" value="1"/>
</dbReference>
<dbReference type="Gene3D" id="3.40.1780.10">
    <property type="entry name" value="QueA-like"/>
    <property type="match status" value="1"/>
</dbReference>
<dbReference type="HAMAP" id="MF_00113">
    <property type="entry name" value="QueA"/>
    <property type="match status" value="1"/>
</dbReference>
<dbReference type="InterPro" id="IPR003699">
    <property type="entry name" value="QueA"/>
</dbReference>
<dbReference type="InterPro" id="IPR042118">
    <property type="entry name" value="QueA_dom1"/>
</dbReference>
<dbReference type="InterPro" id="IPR042119">
    <property type="entry name" value="QueA_dom2"/>
</dbReference>
<dbReference type="InterPro" id="IPR036100">
    <property type="entry name" value="QueA_sf"/>
</dbReference>
<dbReference type="NCBIfam" id="NF001140">
    <property type="entry name" value="PRK00147.1"/>
    <property type="match status" value="1"/>
</dbReference>
<dbReference type="NCBIfam" id="TIGR00113">
    <property type="entry name" value="queA"/>
    <property type="match status" value="1"/>
</dbReference>
<dbReference type="PANTHER" id="PTHR30307">
    <property type="entry name" value="S-ADENOSYLMETHIONINE:TRNA RIBOSYLTRANSFERASE-ISOMERASE"/>
    <property type="match status" value="1"/>
</dbReference>
<dbReference type="PANTHER" id="PTHR30307:SF0">
    <property type="entry name" value="S-ADENOSYLMETHIONINE:TRNA RIBOSYLTRANSFERASE-ISOMERASE"/>
    <property type="match status" value="1"/>
</dbReference>
<dbReference type="Pfam" id="PF02547">
    <property type="entry name" value="Queuosine_synth"/>
    <property type="match status" value="1"/>
</dbReference>
<dbReference type="SUPFAM" id="SSF111337">
    <property type="entry name" value="QueA-like"/>
    <property type="match status" value="1"/>
</dbReference>
<organism>
    <name type="scientific">Xanthomonas euvesicatoria pv. vesicatoria (strain 85-10)</name>
    <name type="common">Xanthomonas campestris pv. vesicatoria</name>
    <dbReference type="NCBI Taxonomy" id="316273"/>
    <lineage>
        <taxon>Bacteria</taxon>
        <taxon>Pseudomonadati</taxon>
        <taxon>Pseudomonadota</taxon>
        <taxon>Gammaproteobacteria</taxon>
        <taxon>Lysobacterales</taxon>
        <taxon>Lysobacteraceae</taxon>
        <taxon>Xanthomonas</taxon>
    </lineage>
</organism>
<proteinExistence type="inferred from homology"/>
<feature type="chain" id="PRO_0000231392" description="S-adenosylmethionine:tRNA ribosyltransferase-isomerase">
    <location>
        <begin position="1"/>
        <end position="356"/>
    </location>
</feature>